<accession>Q9V7U0</accession>
<accession>Q86P83</accession>
<protein>
    <recommendedName>
        <fullName>Pro-resilin</fullName>
    </recommendedName>
</protein>
<organism>
    <name type="scientific">Drosophila melanogaster</name>
    <name type="common">Fruit fly</name>
    <dbReference type="NCBI Taxonomy" id="7227"/>
    <lineage>
        <taxon>Eukaryota</taxon>
        <taxon>Metazoa</taxon>
        <taxon>Ecdysozoa</taxon>
        <taxon>Arthropoda</taxon>
        <taxon>Hexapoda</taxon>
        <taxon>Insecta</taxon>
        <taxon>Pterygota</taxon>
        <taxon>Neoptera</taxon>
        <taxon>Endopterygota</taxon>
        <taxon>Diptera</taxon>
        <taxon>Brachycera</taxon>
        <taxon>Muscomorpha</taxon>
        <taxon>Ephydroidea</taxon>
        <taxon>Drosophilidae</taxon>
        <taxon>Drosophila</taxon>
        <taxon>Sophophora</taxon>
    </lineage>
</organism>
<gene>
    <name type="primary">resilin</name>
    <name type="ORF">CG15920</name>
</gene>
<name>RESIL_DROME</name>
<feature type="signal peptide" evidence="1">
    <location>
        <begin position="1"/>
        <end position="17"/>
    </location>
</feature>
<feature type="chain" id="PRO_0000042845" description="Pro-resilin" evidence="1">
    <location>
        <begin position="18"/>
        <end position="620"/>
    </location>
</feature>
<feature type="repeat" description="Elastic 1" evidence="1">
    <location>
        <begin position="42"/>
        <end position="56"/>
    </location>
</feature>
<feature type="repeat" description="Elastic 2" evidence="1">
    <location>
        <begin position="57"/>
        <end position="77"/>
    </location>
</feature>
<feature type="repeat" description="Elastic 3" evidence="1">
    <location>
        <begin position="78"/>
        <end position="97"/>
    </location>
</feature>
<feature type="repeat" description="Elastic 4" evidence="1">
    <location>
        <begin position="98"/>
        <end position="112"/>
    </location>
</feature>
<feature type="repeat" description="Elastic 5" evidence="1">
    <location>
        <begin position="113"/>
        <end position="127"/>
    </location>
</feature>
<feature type="repeat" description="Elastic 6" evidence="1">
    <location>
        <begin position="128"/>
        <end position="145"/>
    </location>
</feature>
<feature type="repeat" description="Elastic 7" evidence="1">
    <location>
        <begin position="146"/>
        <end position="164"/>
    </location>
</feature>
<feature type="repeat" description="Elastic 8" evidence="1">
    <location>
        <begin position="165"/>
        <end position="179"/>
    </location>
</feature>
<feature type="repeat" description="Elastic 9" evidence="1">
    <location>
        <begin position="180"/>
        <end position="194"/>
    </location>
</feature>
<feature type="repeat" description="Elastic 10" evidence="1">
    <location>
        <begin position="195"/>
        <end position="210"/>
    </location>
</feature>
<feature type="repeat" description="Elastic 11" evidence="1">
    <location>
        <begin position="211"/>
        <end position="225"/>
    </location>
</feature>
<feature type="repeat" description="Elastic 12" evidence="1">
    <location>
        <begin position="226"/>
        <end position="244"/>
    </location>
</feature>
<feature type="repeat" description="Elastic 13" evidence="1">
    <location>
        <begin position="245"/>
        <end position="262"/>
    </location>
</feature>
<feature type="repeat" description="Elastic 14" evidence="1">
    <location>
        <begin position="263"/>
        <end position="276"/>
    </location>
</feature>
<feature type="repeat" description="Elastic 15" evidence="1">
    <location>
        <begin position="277"/>
        <end position="292"/>
    </location>
</feature>
<feature type="repeat" description="Elastic 16" evidence="1">
    <location>
        <begin position="293"/>
        <end position="307"/>
    </location>
</feature>
<feature type="repeat" description="Elastic 17" evidence="1">
    <location>
        <begin position="308"/>
        <end position="324"/>
    </location>
</feature>
<feature type="domain" description="Chitin-binding type R&amp;R" evidence="2">
    <location>
        <begin position="342"/>
        <end position="415"/>
    </location>
</feature>
<feature type="region of interest" description="Disordered" evidence="3">
    <location>
        <begin position="22"/>
        <end position="376"/>
    </location>
</feature>
<feature type="region of interest" description="Disordered" evidence="3">
    <location>
        <begin position="390"/>
        <end position="620"/>
    </location>
</feature>
<feature type="compositionally biased region" description="Gly residues" evidence="3">
    <location>
        <begin position="67"/>
        <end position="81"/>
    </location>
</feature>
<feature type="compositionally biased region" description="Gly residues" evidence="3">
    <location>
        <begin position="90"/>
        <end position="99"/>
    </location>
</feature>
<feature type="compositionally biased region" description="Gly residues" evidence="3">
    <location>
        <begin position="137"/>
        <end position="147"/>
    </location>
</feature>
<feature type="compositionally biased region" description="Gly residues" evidence="3">
    <location>
        <begin position="156"/>
        <end position="166"/>
    </location>
</feature>
<feature type="compositionally biased region" description="Gly residues" evidence="3">
    <location>
        <begin position="235"/>
        <end position="246"/>
    </location>
</feature>
<feature type="compositionally biased region" description="Gly residues" evidence="3">
    <location>
        <begin position="255"/>
        <end position="264"/>
    </location>
</feature>
<feature type="compositionally biased region" description="Low complexity" evidence="3">
    <location>
        <begin position="310"/>
        <end position="321"/>
    </location>
</feature>
<feature type="compositionally biased region" description="Gly residues" evidence="3">
    <location>
        <begin position="322"/>
        <end position="334"/>
    </location>
</feature>
<feature type="compositionally biased region" description="Gly residues" evidence="3">
    <location>
        <begin position="411"/>
        <end position="422"/>
    </location>
</feature>
<feature type="compositionally biased region" description="Low complexity" evidence="3">
    <location>
        <begin position="423"/>
        <end position="432"/>
    </location>
</feature>
<feature type="compositionally biased region" description="Gly residues" evidence="3">
    <location>
        <begin position="433"/>
        <end position="513"/>
    </location>
</feature>
<feature type="compositionally biased region" description="Gly residues" evidence="3">
    <location>
        <begin position="523"/>
        <end position="563"/>
    </location>
</feature>
<feature type="compositionally biased region" description="Gly residues" evidence="3">
    <location>
        <begin position="573"/>
        <end position="582"/>
    </location>
</feature>
<feature type="compositionally biased region" description="Low complexity" evidence="3">
    <location>
        <begin position="583"/>
        <end position="595"/>
    </location>
</feature>
<feature type="compositionally biased region" description="Gly residues" evidence="3">
    <location>
        <begin position="596"/>
        <end position="610"/>
    </location>
</feature>
<feature type="compositionally biased region" description="Low complexity" evidence="3">
    <location>
        <begin position="611"/>
        <end position="620"/>
    </location>
</feature>
<feature type="splice variant" id="VSP_051872" description="In isoform B." evidence="6 7">
    <location>
        <begin position="341"/>
        <end position="385"/>
    </location>
</feature>
<evidence type="ECO:0000255" key="1"/>
<evidence type="ECO:0000255" key="2">
    <source>
        <dbReference type="PROSITE-ProRule" id="PRU00497"/>
    </source>
</evidence>
<evidence type="ECO:0000256" key="3">
    <source>
        <dbReference type="SAM" id="MobiDB-lite"/>
    </source>
</evidence>
<evidence type="ECO:0000269" key="4">
    <source>
    </source>
</evidence>
<evidence type="ECO:0000269" key="5">
    <source>
    </source>
</evidence>
<evidence type="ECO:0000303" key="6">
    <source>
    </source>
</evidence>
<evidence type="ECO:0000303" key="7">
    <source ref="3"/>
</evidence>
<evidence type="ECO:0000305" key="8"/>
<evidence type="ECO:0000312" key="9">
    <source>
        <dbReference type="EMBL" id="AAF57953.1"/>
    </source>
</evidence>
<evidence type="ECO:0000312" key="10">
    <source>
        <dbReference type="EMBL" id="AAO25082.1"/>
    </source>
</evidence>
<proteinExistence type="evidence at protein level"/>
<keyword id="KW-0025">Alternative splicing</keyword>
<keyword id="KW-0193">Cuticle</keyword>
<keyword id="KW-1185">Reference proteome</keyword>
<keyword id="KW-0677">Repeat</keyword>
<keyword id="KW-0732">Signal</keyword>
<sequence length="620" mass="58604">MFKLLGLTLLMAMVVLGRPEPPVNSYLPPSDSYGAPGQSGPGGRPSDSYGAPGGGNGGRPSDSYGAPGQGQGQGQGQGGYAGKPSDTYGAPGGGNGNGGRPSSSYGAPGGGNGGRPSDTYGAPGGGNGGRPSDTYGAPGGGGNGNGGRPSSSYGAPGQGQGNGNGGRSSSSYGAPGGGNGGRPSDTYGAPGGGNGGRPSDTYGAPGGGNNGGRPSSSYGAPGGGNGGRPSDTYGAPGGGNGNGSGGRPSSSYGAPGQGQGGFGGRPSDSYGAPGQNQKPSDSYGAPGSGNGNGGRPSSSYGAPGSGPGGRPSDSYGPPASGSGAGGAGGSGPGGADYDNDEPAKYEFNYQVEDAPSGLSFGHSEMRDGDFTTGQYNVLLPDGRKQIVEYEADQQGYRPQIRYEGDANDGSGPSGPGGPGGQNLGADGYSSGRPGNGNGNGNGGYSGGRPGGQDLGPSGYSGGRPGGQDLGAGGYSNGKPGGQDLGPGGYSGGRPGGQDLGRDGYSGGRPGGQDLGASGYSNGRPGGNGNGGSDGGRVIIGGRVIGGQDGGDQGYSGGRPGGQDLGRDGYSSGRPGGRPGGNGQDSQDGQGYSSGRPGQGGRNGFGPGGQNGDNDGSGYRY</sequence>
<comment type="function">
    <text evidence="8">Plays a central role in insect flight by providing low stiffness, high strain and efficient energy storage.</text>
</comment>
<comment type="alternative products">
    <event type="alternative splicing"/>
    <isoform>
        <id>Q9V7U0-1</id>
        <name evidence="6">A</name>
        <sequence type="displayed"/>
    </isoform>
    <isoform>
        <id>Q9V7U0-2</id>
        <name evidence="6">B</name>
        <sequence type="described" ref="VSP_051872"/>
    </isoform>
</comment>
<comment type="developmental stage">
    <text evidence="5">Expressed at pupal stage only.</text>
</comment>
<comment type="biotechnology">
    <text evidence="5">Its strong elasticity suggests that it may be used for industrial and pharmaceutical applications. Recombinant protein can be cast into a rubber-like biomaterial by rapid photochemical cross-linking. The resilience (recovery after deformation) of cross-linked recombinant resilin exceeds that of unfilled synthetic polybutadiene, a high resilience rubber.</text>
</comment>
<reference evidence="9" key="1">
    <citation type="journal article" date="2000" name="Science">
        <title>The genome sequence of Drosophila melanogaster.</title>
        <authorList>
            <person name="Adams M.D."/>
            <person name="Celniker S.E."/>
            <person name="Holt R.A."/>
            <person name="Evans C.A."/>
            <person name="Gocayne J.D."/>
            <person name="Amanatides P.G."/>
            <person name="Scherer S.E."/>
            <person name="Li P.W."/>
            <person name="Hoskins R.A."/>
            <person name="Galle R.F."/>
            <person name="George R.A."/>
            <person name="Lewis S.E."/>
            <person name="Richards S."/>
            <person name="Ashburner M."/>
            <person name="Henderson S.N."/>
            <person name="Sutton G.G."/>
            <person name="Wortman J.R."/>
            <person name="Yandell M.D."/>
            <person name="Zhang Q."/>
            <person name="Chen L.X."/>
            <person name="Brandon R.C."/>
            <person name="Rogers Y.-H.C."/>
            <person name="Blazej R.G."/>
            <person name="Champe M."/>
            <person name="Pfeiffer B.D."/>
            <person name="Wan K.H."/>
            <person name="Doyle C."/>
            <person name="Baxter E.G."/>
            <person name="Helt G."/>
            <person name="Nelson C.R."/>
            <person name="Miklos G.L.G."/>
            <person name="Abril J.F."/>
            <person name="Agbayani A."/>
            <person name="An H.-J."/>
            <person name="Andrews-Pfannkoch C."/>
            <person name="Baldwin D."/>
            <person name="Ballew R.M."/>
            <person name="Basu A."/>
            <person name="Baxendale J."/>
            <person name="Bayraktaroglu L."/>
            <person name="Beasley E.M."/>
            <person name="Beeson K.Y."/>
            <person name="Benos P.V."/>
            <person name="Berman B.P."/>
            <person name="Bhandari D."/>
            <person name="Bolshakov S."/>
            <person name="Borkova D."/>
            <person name="Botchan M.R."/>
            <person name="Bouck J."/>
            <person name="Brokstein P."/>
            <person name="Brottier P."/>
            <person name="Burtis K.C."/>
            <person name="Busam D.A."/>
            <person name="Butler H."/>
            <person name="Cadieu E."/>
            <person name="Center A."/>
            <person name="Chandra I."/>
            <person name="Cherry J.M."/>
            <person name="Cawley S."/>
            <person name="Dahlke C."/>
            <person name="Davenport L.B."/>
            <person name="Davies P."/>
            <person name="de Pablos B."/>
            <person name="Delcher A."/>
            <person name="Deng Z."/>
            <person name="Mays A.D."/>
            <person name="Dew I."/>
            <person name="Dietz S.M."/>
            <person name="Dodson K."/>
            <person name="Doup L.E."/>
            <person name="Downes M."/>
            <person name="Dugan-Rocha S."/>
            <person name="Dunkov B.C."/>
            <person name="Dunn P."/>
            <person name="Durbin K.J."/>
            <person name="Evangelista C.C."/>
            <person name="Ferraz C."/>
            <person name="Ferriera S."/>
            <person name="Fleischmann W."/>
            <person name="Fosler C."/>
            <person name="Gabrielian A.E."/>
            <person name="Garg N.S."/>
            <person name="Gelbart W.M."/>
            <person name="Glasser K."/>
            <person name="Glodek A."/>
            <person name="Gong F."/>
            <person name="Gorrell J.H."/>
            <person name="Gu Z."/>
            <person name="Guan P."/>
            <person name="Harris M."/>
            <person name="Harris N.L."/>
            <person name="Harvey D.A."/>
            <person name="Heiman T.J."/>
            <person name="Hernandez J.R."/>
            <person name="Houck J."/>
            <person name="Hostin D."/>
            <person name="Houston K.A."/>
            <person name="Howland T.J."/>
            <person name="Wei M.-H."/>
            <person name="Ibegwam C."/>
            <person name="Jalali M."/>
            <person name="Kalush F."/>
            <person name="Karpen G.H."/>
            <person name="Ke Z."/>
            <person name="Kennison J.A."/>
            <person name="Ketchum K.A."/>
            <person name="Kimmel B.E."/>
            <person name="Kodira C.D."/>
            <person name="Kraft C.L."/>
            <person name="Kravitz S."/>
            <person name="Kulp D."/>
            <person name="Lai Z."/>
            <person name="Lasko P."/>
            <person name="Lei Y."/>
            <person name="Levitsky A.A."/>
            <person name="Li J.H."/>
            <person name="Li Z."/>
            <person name="Liang Y."/>
            <person name="Lin X."/>
            <person name="Liu X."/>
            <person name="Mattei B."/>
            <person name="McIntosh T.C."/>
            <person name="McLeod M.P."/>
            <person name="McPherson D."/>
            <person name="Merkulov G."/>
            <person name="Milshina N.V."/>
            <person name="Mobarry C."/>
            <person name="Morris J."/>
            <person name="Moshrefi A."/>
            <person name="Mount S.M."/>
            <person name="Moy M."/>
            <person name="Murphy B."/>
            <person name="Murphy L."/>
            <person name="Muzny D.M."/>
            <person name="Nelson D.L."/>
            <person name="Nelson D.R."/>
            <person name="Nelson K.A."/>
            <person name="Nixon K."/>
            <person name="Nusskern D.R."/>
            <person name="Pacleb J.M."/>
            <person name="Palazzolo M."/>
            <person name="Pittman G.S."/>
            <person name="Pan S."/>
            <person name="Pollard J."/>
            <person name="Puri V."/>
            <person name="Reese M.G."/>
            <person name="Reinert K."/>
            <person name="Remington K."/>
            <person name="Saunders R.D.C."/>
            <person name="Scheeler F."/>
            <person name="Shen H."/>
            <person name="Shue B.C."/>
            <person name="Siden-Kiamos I."/>
            <person name="Simpson M."/>
            <person name="Skupski M.P."/>
            <person name="Smith T.J."/>
            <person name="Spier E."/>
            <person name="Spradling A.C."/>
            <person name="Stapleton M."/>
            <person name="Strong R."/>
            <person name="Sun E."/>
            <person name="Svirskas R."/>
            <person name="Tector C."/>
            <person name="Turner R."/>
            <person name="Venter E."/>
            <person name="Wang A.H."/>
            <person name="Wang X."/>
            <person name="Wang Z.-Y."/>
            <person name="Wassarman D.A."/>
            <person name="Weinstock G.M."/>
            <person name="Weissenbach J."/>
            <person name="Williams S.M."/>
            <person name="Woodage T."/>
            <person name="Worley K.C."/>
            <person name="Wu D."/>
            <person name="Yang S."/>
            <person name="Yao Q.A."/>
            <person name="Ye J."/>
            <person name="Yeh R.-F."/>
            <person name="Zaveri J.S."/>
            <person name="Zhan M."/>
            <person name="Zhang G."/>
            <person name="Zhao Q."/>
            <person name="Zheng L."/>
            <person name="Zheng X.H."/>
            <person name="Zhong F.N."/>
            <person name="Zhong W."/>
            <person name="Zhou X."/>
            <person name="Zhu S.C."/>
            <person name="Zhu X."/>
            <person name="Smith H.O."/>
            <person name="Gibbs R.A."/>
            <person name="Myers E.W."/>
            <person name="Rubin G.M."/>
            <person name="Venter J.C."/>
        </authorList>
    </citation>
    <scope>NUCLEOTIDE SEQUENCE [LARGE SCALE GENOMIC DNA]</scope>
    <source>
        <strain evidence="4">Berkeley</strain>
    </source>
</reference>
<reference evidence="8 9" key="2">
    <citation type="journal article" date="2002" name="Genome Biol.">
        <title>Annotation of the Drosophila melanogaster euchromatic genome: a systematic review.</title>
        <authorList>
            <person name="Misra S."/>
            <person name="Crosby M.A."/>
            <person name="Mungall C.J."/>
            <person name="Matthews B.B."/>
            <person name="Campbell K.S."/>
            <person name="Hradecky P."/>
            <person name="Huang Y."/>
            <person name="Kaminker J.S."/>
            <person name="Millburn G.H."/>
            <person name="Prochnik S.E."/>
            <person name="Smith C.D."/>
            <person name="Tupy J.L."/>
            <person name="Whitfield E.J."/>
            <person name="Bayraktaroglu L."/>
            <person name="Berman B.P."/>
            <person name="Bettencourt B.R."/>
            <person name="Celniker S.E."/>
            <person name="de Grey A.D.N.J."/>
            <person name="Drysdale R.A."/>
            <person name="Harris N.L."/>
            <person name="Richter J."/>
            <person name="Russo S."/>
            <person name="Schroeder A.J."/>
            <person name="Shu S.Q."/>
            <person name="Stapleton M."/>
            <person name="Yamada C."/>
            <person name="Ashburner M."/>
            <person name="Gelbart W.M."/>
            <person name="Rubin G.M."/>
            <person name="Lewis S.E."/>
        </authorList>
    </citation>
    <scope>GENOME REANNOTATION</scope>
    <scope>ALTERNATIVE SPLICING</scope>
    <source>
        <strain>Berkeley</strain>
    </source>
</reference>
<reference evidence="8 10" key="3">
    <citation type="submission" date="2003-01" db="EMBL/GenBank/DDBJ databases">
        <authorList>
            <person name="Stapleton M."/>
            <person name="Brokstein P."/>
            <person name="Hong L."/>
            <person name="Agbayani A."/>
            <person name="Carlson J.W."/>
            <person name="Champe M."/>
            <person name="Chavez C."/>
            <person name="Dorsett V."/>
            <person name="Dresnek D."/>
            <person name="Farfan D."/>
            <person name="Frise E."/>
            <person name="George R.A."/>
            <person name="Gonzalez M."/>
            <person name="Guarin H."/>
            <person name="Kronmiller B."/>
            <person name="Li P.W."/>
            <person name="Liao G."/>
            <person name="Miranda A."/>
            <person name="Mungall C.J."/>
            <person name="Nunoo J."/>
            <person name="Pacleb J.M."/>
            <person name="Paragas V."/>
            <person name="Park S."/>
            <person name="Patel S."/>
            <person name="Phouanenavong S."/>
            <person name="Wan K.H."/>
            <person name="Yu C."/>
            <person name="Lewis S.E."/>
            <person name="Rubin G.M."/>
            <person name="Celniker S.E."/>
        </authorList>
    </citation>
    <scope>NUCLEOTIDE SEQUENCE [LARGE SCALE MRNA] (ISOFORM B)</scope>
    <source>
        <strain>Berkeley</strain>
        <tissue>Testis</tissue>
    </source>
</reference>
<reference key="4">
    <citation type="journal article" date="2001" name="Insect Biochem. Mol. Biol.">
        <title>Tentative identification of a resilin gene in Drosophila melanogaster.</title>
        <authorList>
            <person name="Ardell D.H."/>
            <person name="Andersen S.O."/>
        </authorList>
    </citation>
    <scope>IDENTIFICATION</scope>
</reference>
<reference evidence="8" key="5">
    <citation type="journal article" date="2005" name="Nature">
        <title>Synthesis and properties of crosslinked recombinant pro-resilin.</title>
        <authorList>
            <person name="Elvin C.M."/>
            <person name="Carr A.G."/>
            <person name="Huson M.G."/>
            <person name="Maxwell J.M."/>
            <person name="Pearson R.D."/>
            <person name="Vuocolo T."/>
            <person name="Liyou N.E."/>
            <person name="Wong D.C.C."/>
            <person name="Merritt D.J."/>
            <person name="Dixon N.E."/>
        </authorList>
    </citation>
    <scope>DEVELOPMENTAL STAGE</scope>
    <scope>BIOTECHNOLOGICAL RELEVANCE</scope>
</reference>
<dbReference type="EMBL" id="AE013599">
    <property type="protein sequence ID" value="AAF57953.1"/>
    <property type="molecule type" value="Genomic_DNA"/>
</dbReference>
<dbReference type="EMBL" id="AE013599">
    <property type="protein sequence ID" value="AAS64829.1"/>
    <property type="molecule type" value="Genomic_DNA"/>
</dbReference>
<dbReference type="EMBL" id="BT003322">
    <property type="protein sequence ID" value="AAO25082.1"/>
    <property type="molecule type" value="mRNA"/>
</dbReference>
<dbReference type="RefSeq" id="NP_611157.1">
    <molecule id="Q9V7U0-1"/>
    <property type="nucleotide sequence ID" value="NM_137313.4"/>
</dbReference>
<dbReference type="RefSeq" id="NP_995860.1">
    <molecule id="Q9V7U0-2"/>
    <property type="nucleotide sequence ID" value="NM_206138.2"/>
</dbReference>
<dbReference type="BioGRID" id="62589">
    <property type="interactions" value="1"/>
</dbReference>
<dbReference type="FunCoup" id="Q9V7U0">
    <property type="interactions" value="2"/>
</dbReference>
<dbReference type="STRING" id="7227.FBpp0086175"/>
<dbReference type="PaxDb" id="7227-FBpp0086175"/>
<dbReference type="EnsemblMetazoa" id="FBtr0087024">
    <molecule id="Q9V7U0-1"/>
    <property type="protein sequence ID" value="FBpp0086175"/>
    <property type="gene ID" value="FBgn0034157"/>
</dbReference>
<dbReference type="EnsemblMetazoa" id="FBtr0087025">
    <molecule id="Q9V7U0-2"/>
    <property type="protein sequence ID" value="FBpp0086176"/>
    <property type="gene ID" value="FBgn0034157"/>
</dbReference>
<dbReference type="GeneID" id="36880"/>
<dbReference type="KEGG" id="dme:Dmel_CG15920"/>
<dbReference type="UCSC" id="CG15920-RA">
    <molecule id="Q9V7U0-1"/>
    <property type="organism name" value="d. melanogaster"/>
</dbReference>
<dbReference type="AGR" id="FB:FBgn0034157"/>
<dbReference type="CTD" id="36880"/>
<dbReference type="FlyBase" id="FBgn0034157">
    <property type="gene designation" value="resilin"/>
</dbReference>
<dbReference type="VEuPathDB" id="VectorBase:FBgn0034157"/>
<dbReference type="eggNOG" id="ENOG502S3I7">
    <property type="taxonomic scope" value="Eukaryota"/>
</dbReference>
<dbReference type="HOGENOM" id="CLU_448552_0_0_1"/>
<dbReference type="InParanoid" id="Q9V7U0"/>
<dbReference type="OMA" id="EPAKYQF"/>
<dbReference type="OrthoDB" id="6425109at2759"/>
<dbReference type="PhylomeDB" id="Q9V7U0"/>
<dbReference type="BioGRID-ORCS" id="36880">
    <property type="hits" value="0 hits in 1 CRISPR screen"/>
</dbReference>
<dbReference type="CD-CODE" id="9321DD1F">
    <property type="entry name" value="Synthetic Condensate 000162"/>
</dbReference>
<dbReference type="ChiTaRS" id="resilin">
    <property type="organism name" value="fly"/>
</dbReference>
<dbReference type="GenomeRNAi" id="36880"/>
<dbReference type="PRO" id="PR:Q9V7U0"/>
<dbReference type="Proteomes" id="UP000000803">
    <property type="component" value="Chromosome 2R"/>
</dbReference>
<dbReference type="Bgee" id="FBgn0034157">
    <property type="expression patterns" value="Expressed in pupa and 1 other cell type or tissue"/>
</dbReference>
<dbReference type="GO" id="GO:0062129">
    <property type="term" value="C:chitin-based extracellular matrix"/>
    <property type="evidence" value="ECO:0000255"/>
    <property type="project" value="FlyBase"/>
</dbReference>
<dbReference type="GO" id="GO:0031012">
    <property type="term" value="C:extracellular matrix"/>
    <property type="evidence" value="ECO:0000318"/>
    <property type="project" value="GO_Central"/>
</dbReference>
<dbReference type="GO" id="GO:0005576">
    <property type="term" value="C:extracellular region"/>
    <property type="evidence" value="ECO:0000303"/>
    <property type="project" value="UniProtKB"/>
</dbReference>
<dbReference type="GO" id="GO:0032992">
    <property type="term" value="C:protein-carbohydrate complex"/>
    <property type="evidence" value="ECO:0000314"/>
    <property type="project" value="FlyBase"/>
</dbReference>
<dbReference type="GO" id="GO:0008061">
    <property type="term" value="F:chitin binding"/>
    <property type="evidence" value="ECO:0000314"/>
    <property type="project" value="FlyBase"/>
</dbReference>
<dbReference type="GO" id="GO:0030023">
    <property type="term" value="F:extracellular matrix constituent conferring elasticity"/>
    <property type="evidence" value="ECO:0000314"/>
    <property type="project" value="FlyBase"/>
</dbReference>
<dbReference type="GO" id="GO:0008010">
    <property type="term" value="F:structural constituent of chitin-based larval cuticle"/>
    <property type="evidence" value="ECO:0000255"/>
    <property type="project" value="FlyBase"/>
</dbReference>
<dbReference type="GO" id="GO:0042302">
    <property type="term" value="F:structural constituent of cuticle"/>
    <property type="evidence" value="ECO:0000303"/>
    <property type="project" value="UniProtKB"/>
</dbReference>
<dbReference type="GO" id="GO:0040003">
    <property type="term" value="P:chitin-based cuticle development"/>
    <property type="evidence" value="ECO:0000255"/>
    <property type="project" value="FlyBase"/>
</dbReference>
<dbReference type="InterPro" id="IPR031311">
    <property type="entry name" value="CHIT_BIND_RR_consensus"/>
</dbReference>
<dbReference type="InterPro" id="IPR000618">
    <property type="entry name" value="Insect_cuticle"/>
</dbReference>
<dbReference type="InterPro" id="IPR051217">
    <property type="entry name" value="Insect_Cuticle_Struc_Prot"/>
</dbReference>
<dbReference type="PANTHER" id="PTHR12236:SF85">
    <property type="entry name" value="PRO-RESILIN"/>
    <property type="match status" value="1"/>
</dbReference>
<dbReference type="PANTHER" id="PTHR12236">
    <property type="entry name" value="STRUCTURAL CONTITUENT OF CUTICLE"/>
    <property type="match status" value="1"/>
</dbReference>
<dbReference type="PROSITE" id="PS00233">
    <property type="entry name" value="CHIT_BIND_RR_1"/>
    <property type="match status" value="1"/>
</dbReference>
<dbReference type="PROSITE" id="PS51155">
    <property type="entry name" value="CHIT_BIND_RR_2"/>
    <property type="match status" value="1"/>
</dbReference>